<dbReference type="EC" id="2.2.1.6"/>
<dbReference type="EMBL" id="L42023">
    <property type="protein sequence ID" value="AAC23233.1"/>
    <property type="molecule type" value="Genomic_DNA"/>
</dbReference>
<dbReference type="PIR" id="C64131">
    <property type="entry name" value="C64131"/>
</dbReference>
<dbReference type="RefSeq" id="NP_439730.1">
    <property type="nucleotide sequence ID" value="NC_000907.1"/>
</dbReference>
<dbReference type="SMR" id="P45261"/>
<dbReference type="STRING" id="71421.HI_1585"/>
<dbReference type="EnsemblBacteria" id="AAC23233">
    <property type="protein sequence ID" value="AAC23233"/>
    <property type="gene ID" value="HI_1585"/>
</dbReference>
<dbReference type="KEGG" id="hin:HI_1585"/>
<dbReference type="PATRIC" id="fig|71421.8.peg.1659"/>
<dbReference type="eggNOG" id="COG0028">
    <property type="taxonomic scope" value="Bacteria"/>
</dbReference>
<dbReference type="HOGENOM" id="CLU_013748_1_2_6"/>
<dbReference type="OrthoDB" id="9785953at2"/>
<dbReference type="PhylomeDB" id="P45261"/>
<dbReference type="BioCyc" id="HINF71421:G1GJ1-1601-MONOMER"/>
<dbReference type="BRENDA" id="2.2.1.6">
    <property type="organism ID" value="2529"/>
</dbReference>
<dbReference type="UniPathway" id="UPA00047">
    <property type="reaction ID" value="UER00055"/>
</dbReference>
<dbReference type="UniPathway" id="UPA00049">
    <property type="reaction ID" value="UER00059"/>
</dbReference>
<dbReference type="Proteomes" id="UP000000579">
    <property type="component" value="Chromosome"/>
</dbReference>
<dbReference type="GO" id="GO:0005948">
    <property type="term" value="C:acetolactate synthase complex"/>
    <property type="evidence" value="ECO:0000318"/>
    <property type="project" value="GO_Central"/>
</dbReference>
<dbReference type="GO" id="GO:0003984">
    <property type="term" value="F:acetolactate synthase activity"/>
    <property type="evidence" value="ECO:0000318"/>
    <property type="project" value="GO_Central"/>
</dbReference>
<dbReference type="GO" id="GO:0050660">
    <property type="term" value="F:flavin adenine dinucleotide binding"/>
    <property type="evidence" value="ECO:0000318"/>
    <property type="project" value="GO_Central"/>
</dbReference>
<dbReference type="GO" id="GO:0000287">
    <property type="term" value="F:magnesium ion binding"/>
    <property type="evidence" value="ECO:0007669"/>
    <property type="project" value="InterPro"/>
</dbReference>
<dbReference type="GO" id="GO:0030976">
    <property type="term" value="F:thiamine pyrophosphate binding"/>
    <property type="evidence" value="ECO:0007669"/>
    <property type="project" value="InterPro"/>
</dbReference>
<dbReference type="GO" id="GO:0009097">
    <property type="term" value="P:isoleucine biosynthetic process"/>
    <property type="evidence" value="ECO:0000318"/>
    <property type="project" value="GO_Central"/>
</dbReference>
<dbReference type="GO" id="GO:0009099">
    <property type="term" value="P:L-valine biosynthetic process"/>
    <property type="evidence" value="ECO:0000318"/>
    <property type="project" value="GO_Central"/>
</dbReference>
<dbReference type="CDD" id="cd02015">
    <property type="entry name" value="TPP_AHAS"/>
    <property type="match status" value="1"/>
</dbReference>
<dbReference type="CDD" id="cd07035">
    <property type="entry name" value="TPP_PYR_POX_like"/>
    <property type="match status" value="1"/>
</dbReference>
<dbReference type="FunFam" id="3.40.50.1220:FF:000008">
    <property type="entry name" value="Acetolactate synthase"/>
    <property type="match status" value="1"/>
</dbReference>
<dbReference type="FunFam" id="3.40.50.970:FF:000007">
    <property type="entry name" value="Acetolactate synthase"/>
    <property type="match status" value="1"/>
</dbReference>
<dbReference type="FunFam" id="3.40.50.970:FF:000016">
    <property type="entry name" value="Acetolactate synthase"/>
    <property type="match status" value="1"/>
</dbReference>
<dbReference type="Gene3D" id="3.40.50.970">
    <property type="match status" value="2"/>
</dbReference>
<dbReference type="Gene3D" id="3.40.50.1220">
    <property type="entry name" value="TPP-binding domain"/>
    <property type="match status" value="1"/>
</dbReference>
<dbReference type="InterPro" id="IPR012846">
    <property type="entry name" value="Acetolactate_synth_lsu"/>
</dbReference>
<dbReference type="InterPro" id="IPR039368">
    <property type="entry name" value="AHAS_TPP"/>
</dbReference>
<dbReference type="InterPro" id="IPR029035">
    <property type="entry name" value="DHS-like_NAD/FAD-binding_dom"/>
</dbReference>
<dbReference type="InterPro" id="IPR029061">
    <property type="entry name" value="THDP-binding"/>
</dbReference>
<dbReference type="InterPro" id="IPR012000">
    <property type="entry name" value="Thiamin_PyroP_enz_cen_dom"/>
</dbReference>
<dbReference type="InterPro" id="IPR012001">
    <property type="entry name" value="Thiamin_PyroP_enz_TPP-bd_dom"/>
</dbReference>
<dbReference type="InterPro" id="IPR000399">
    <property type="entry name" value="TPP-bd_CS"/>
</dbReference>
<dbReference type="InterPro" id="IPR045229">
    <property type="entry name" value="TPP_enz"/>
</dbReference>
<dbReference type="InterPro" id="IPR011766">
    <property type="entry name" value="TPP_enzyme_TPP-bd"/>
</dbReference>
<dbReference type="NCBIfam" id="TIGR00118">
    <property type="entry name" value="acolac_lg"/>
    <property type="match status" value="1"/>
</dbReference>
<dbReference type="NCBIfam" id="NF005058">
    <property type="entry name" value="PRK06466.1"/>
    <property type="match status" value="1"/>
</dbReference>
<dbReference type="NCBIfam" id="NF005364">
    <property type="entry name" value="PRK06882.1"/>
    <property type="match status" value="1"/>
</dbReference>
<dbReference type="PANTHER" id="PTHR18968:SF13">
    <property type="entry name" value="ACETOLACTATE SYNTHASE CATALYTIC SUBUNIT, MITOCHONDRIAL"/>
    <property type="match status" value="1"/>
</dbReference>
<dbReference type="PANTHER" id="PTHR18968">
    <property type="entry name" value="THIAMINE PYROPHOSPHATE ENZYMES"/>
    <property type="match status" value="1"/>
</dbReference>
<dbReference type="Pfam" id="PF02775">
    <property type="entry name" value="TPP_enzyme_C"/>
    <property type="match status" value="1"/>
</dbReference>
<dbReference type="Pfam" id="PF00205">
    <property type="entry name" value="TPP_enzyme_M"/>
    <property type="match status" value="1"/>
</dbReference>
<dbReference type="Pfam" id="PF02776">
    <property type="entry name" value="TPP_enzyme_N"/>
    <property type="match status" value="1"/>
</dbReference>
<dbReference type="SUPFAM" id="SSF52467">
    <property type="entry name" value="DHS-like NAD/FAD-binding domain"/>
    <property type="match status" value="1"/>
</dbReference>
<dbReference type="SUPFAM" id="SSF52518">
    <property type="entry name" value="Thiamin diphosphate-binding fold (THDP-binding)"/>
    <property type="match status" value="2"/>
</dbReference>
<dbReference type="PROSITE" id="PS00187">
    <property type="entry name" value="TPP_ENZYMES"/>
    <property type="match status" value="1"/>
</dbReference>
<keyword id="KW-0028">Amino-acid biosynthesis</keyword>
<keyword id="KW-0100">Branched-chain amino acid biosynthesis</keyword>
<keyword id="KW-0274">FAD</keyword>
<keyword id="KW-0285">Flavoprotein</keyword>
<keyword id="KW-0460">Magnesium</keyword>
<keyword id="KW-0479">Metal-binding</keyword>
<keyword id="KW-1185">Reference proteome</keyword>
<keyword id="KW-0786">Thiamine pyrophosphate</keyword>
<keyword id="KW-0808">Transferase</keyword>
<feature type="chain" id="PRO_0000090795" description="Acetolactate synthase large subunit">
    <location>
        <begin position="1"/>
        <end position="573"/>
    </location>
</feature>
<feature type="region of interest" description="Thiamine pyrophosphate binding">
    <location>
        <begin position="396"/>
        <end position="476"/>
    </location>
</feature>
<feature type="binding site" evidence="1">
    <location>
        <position position="51"/>
    </location>
    <ligand>
        <name>thiamine diphosphate</name>
        <dbReference type="ChEBI" id="CHEBI:58937"/>
    </ligand>
</feature>
<feature type="binding site" evidence="1">
    <location>
        <position position="153"/>
    </location>
    <ligand>
        <name>FAD</name>
        <dbReference type="ChEBI" id="CHEBI:57692"/>
    </ligand>
</feature>
<feature type="binding site" evidence="1">
    <location>
        <begin position="261"/>
        <end position="282"/>
    </location>
    <ligand>
        <name>FAD</name>
        <dbReference type="ChEBI" id="CHEBI:57692"/>
    </ligand>
</feature>
<feature type="binding site" evidence="1">
    <location>
        <begin position="304"/>
        <end position="323"/>
    </location>
    <ligand>
        <name>FAD</name>
        <dbReference type="ChEBI" id="CHEBI:57692"/>
    </ligand>
</feature>
<feature type="binding site" evidence="1">
    <location>
        <position position="447"/>
    </location>
    <ligand>
        <name>Mg(2+)</name>
        <dbReference type="ChEBI" id="CHEBI:18420"/>
    </ligand>
</feature>
<feature type="binding site" evidence="1">
    <location>
        <position position="474"/>
    </location>
    <ligand>
        <name>Mg(2+)</name>
        <dbReference type="ChEBI" id="CHEBI:18420"/>
    </ligand>
</feature>
<proteinExistence type="inferred from homology"/>
<comment type="catalytic activity">
    <reaction>
        <text>2 pyruvate + H(+) = (2S)-2-acetolactate + CO2</text>
        <dbReference type="Rhea" id="RHEA:25249"/>
        <dbReference type="ChEBI" id="CHEBI:15361"/>
        <dbReference type="ChEBI" id="CHEBI:15378"/>
        <dbReference type="ChEBI" id="CHEBI:16526"/>
        <dbReference type="ChEBI" id="CHEBI:58476"/>
        <dbReference type="EC" id="2.2.1.6"/>
    </reaction>
</comment>
<comment type="cofactor">
    <cofactor evidence="1">
        <name>Mg(2+)</name>
        <dbReference type="ChEBI" id="CHEBI:18420"/>
    </cofactor>
    <text evidence="1">Binds 1 Mg(2+) ion per subunit.</text>
</comment>
<comment type="cofactor">
    <cofactor evidence="1">
        <name>thiamine diphosphate</name>
        <dbReference type="ChEBI" id="CHEBI:58937"/>
    </cofactor>
    <text evidence="1">Binds 1 thiamine pyrophosphate per subunit.</text>
</comment>
<comment type="pathway">
    <text>Amino-acid biosynthesis; L-isoleucine biosynthesis; L-isoleucine from 2-oxobutanoate: step 1/4.</text>
</comment>
<comment type="pathway">
    <text>Amino-acid biosynthesis; L-valine biosynthesis; L-valine from pyruvate: step 1/4.</text>
</comment>
<comment type="subunit">
    <text evidence="1">Dimer of large and small chains.</text>
</comment>
<comment type="miscellaneous">
    <text evidence="1">Contains 1 molecule of FAD per monomer. The role of this cofactor is not clear considering that the reaction does not involve redox chemistry (By similarity).</text>
</comment>
<comment type="similarity">
    <text evidence="2">Belongs to the TPP enzyme family.</text>
</comment>
<accession>P45261</accession>
<protein>
    <recommendedName>
        <fullName>Acetolactate synthase large subunit</fullName>
        <shortName>AHAS</shortName>
        <ecNumber>2.2.1.6</ecNumber>
    </recommendedName>
    <alternativeName>
        <fullName>Acetohydroxy-acid synthase large subunit</fullName>
        <shortName>ALS</shortName>
    </alternativeName>
</protein>
<organism>
    <name type="scientific">Haemophilus influenzae (strain ATCC 51907 / DSM 11121 / KW20 / Rd)</name>
    <dbReference type="NCBI Taxonomy" id="71421"/>
    <lineage>
        <taxon>Bacteria</taxon>
        <taxon>Pseudomonadati</taxon>
        <taxon>Pseudomonadota</taxon>
        <taxon>Gammaproteobacteria</taxon>
        <taxon>Pasteurellales</taxon>
        <taxon>Pasteurellaceae</taxon>
        <taxon>Haemophilus</taxon>
    </lineage>
</organism>
<evidence type="ECO:0000250" key="1"/>
<evidence type="ECO:0000305" key="2"/>
<name>ILVI_HAEIN</name>
<reference key="1">
    <citation type="journal article" date="1995" name="Science">
        <title>Whole-genome random sequencing and assembly of Haemophilus influenzae Rd.</title>
        <authorList>
            <person name="Fleischmann R.D."/>
            <person name="Adams M.D."/>
            <person name="White O."/>
            <person name="Clayton R.A."/>
            <person name="Kirkness E.F."/>
            <person name="Kerlavage A.R."/>
            <person name="Bult C.J."/>
            <person name="Tomb J.-F."/>
            <person name="Dougherty B.A."/>
            <person name="Merrick J.M."/>
            <person name="McKenney K."/>
            <person name="Sutton G.G."/>
            <person name="FitzHugh W."/>
            <person name="Fields C.A."/>
            <person name="Gocayne J.D."/>
            <person name="Scott J.D."/>
            <person name="Shirley R."/>
            <person name="Liu L.-I."/>
            <person name="Glodek A."/>
            <person name="Kelley J.M."/>
            <person name="Weidman J.F."/>
            <person name="Phillips C.A."/>
            <person name="Spriggs T."/>
            <person name="Hedblom E."/>
            <person name="Cotton M.D."/>
            <person name="Utterback T.R."/>
            <person name="Hanna M.C."/>
            <person name="Nguyen D.T."/>
            <person name="Saudek D.M."/>
            <person name="Brandon R.C."/>
            <person name="Fine L.D."/>
            <person name="Fritchman J.L."/>
            <person name="Fuhrmann J.L."/>
            <person name="Geoghagen N.S.M."/>
            <person name="Gnehm C.L."/>
            <person name="McDonald L.A."/>
            <person name="Small K.V."/>
            <person name="Fraser C.M."/>
            <person name="Smith H.O."/>
            <person name="Venter J.C."/>
        </authorList>
    </citation>
    <scope>NUCLEOTIDE SEQUENCE [LARGE SCALE GENOMIC DNA]</scope>
    <source>
        <strain>ATCC 51907 / DSM 11121 / KW20 / Rd</strain>
    </source>
</reference>
<gene>
    <name type="primary">ilvI</name>
    <name type="ordered locus">HI_1585</name>
</gene>
<sequence>MKKLSGAEMVVQSLRDEGVEYVFGYPGGAVLDIYDAIHTLGGIEHILVRHEQAAVHMADGYARSTGKVGCVLVTSGPGATNAITGILTAYTDSVPMVIISGQVMSNLIGSDAFQECDMLGISRPVVKHSFIVKKAEDIPSTLKKAFYIASTGRPGPVVVDIPKDTVNPNFKYPYEYPEYVELRSYNPTVNGHKGQIKKALKALLVAKKPILFVGGGAITAECSEQLIQFAQRLNLPVTSSLMGLGAYPSTDKQFLGMLGMHGTLEANTAMHESDLILGIGVRFDDRTTNNLEKYCPNAKVIHIDIDPTSISKNVPVAIPIVGNAKNVLEEFLGLLNEEGLKSQTDLESWWQEINQWKAKKCLEFDRTSGVIKPQQVVEAVYRLTKGQAYVASDVGQHQMFAALHYPFDEPRHWINSGGAGTMGFGFPAALGVKLAHPEGTVVCVTGDGSIQMNIQELSTATQYGIPVVIICLNNHFLGMVKQWQDLIYSGRHSQTYMNSLPDFAKLAESYGHVGIKIATPDELESKLQEAFSIKNKLVFVDINVDESEHVYPMQIRGGAMNEMILSKPQEETN</sequence>